<protein>
    <recommendedName>
        <fullName>26S proteasome regulatory subunit 8 homolog</fullName>
    </recommendedName>
    <alternativeName>
        <fullName>Protein let1</fullName>
    </alternativeName>
</protein>
<feature type="chain" id="PRO_0000084731" description="26S proteasome regulatory subunit 8 homolog">
    <location>
        <begin position="1"/>
        <end position="403"/>
    </location>
</feature>
<feature type="binding site" evidence="2">
    <location>
        <begin position="186"/>
        <end position="193"/>
    </location>
    <ligand>
        <name>ATP</name>
        <dbReference type="ChEBI" id="CHEBI:30616"/>
    </ligand>
</feature>
<dbReference type="EMBL" id="U02280">
    <property type="protein sequence ID" value="AAA61615.1"/>
    <property type="molecule type" value="Genomic_DNA"/>
</dbReference>
<dbReference type="EMBL" id="CU329671">
    <property type="protein sequence ID" value="CAA22628.1"/>
    <property type="molecule type" value="Genomic_DNA"/>
</dbReference>
<dbReference type="PIR" id="S45176">
    <property type="entry name" value="S45176"/>
</dbReference>
<dbReference type="RefSeq" id="NP_595870.1">
    <property type="nucleotide sequence ID" value="NM_001021776.2"/>
</dbReference>
<dbReference type="SMR" id="P41836"/>
<dbReference type="BioGRID" id="277015">
    <property type="interactions" value="24"/>
</dbReference>
<dbReference type="ComplexPortal" id="CPX-9077">
    <property type="entry name" value="26S proteasome complex"/>
</dbReference>
<dbReference type="FunCoup" id="P41836">
    <property type="interactions" value="255"/>
</dbReference>
<dbReference type="IntAct" id="P41836">
    <property type="interactions" value="1"/>
</dbReference>
<dbReference type="STRING" id="284812.P41836"/>
<dbReference type="iPTMnet" id="P41836"/>
<dbReference type="SwissPalm" id="P41836"/>
<dbReference type="PaxDb" id="4896-SPBC23G7.12c.1"/>
<dbReference type="EnsemblFungi" id="SPBC23G7.12c.1">
    <property type="protein sequence ID" value="SPBC23G7.12c.1:pep"/>
    <property type="gene ID" value="SPBC23G7.12c"/>
</dbReference>
<dbReference type="GeneID" id="2540487"/>
<dbReference type="KEGG" id="spo:2540487"/>
<dbReference type="PomBase" id="SPBC23G7.12c"/>
<dbReference type="VEuPathDB" id="FungiDB:SPBC23G7.12c"/>
<dbReference type="eggNOG" id="KOG0728">
    <property type="taxonomic scope" value="Eukaryota"/>
</dbReference>
<dbReference type="HOGENOM" id="CLU_000688_2_1_1"/>
<dbReference type="InParanoid" id="P41836"/>
<dbReference type="OMA" id="REPAVIF"/>
<dbReference type="PhylomeDB" id="P41836"/>
<dbReference type="Reactome" id="R-SPO-1236978">
    <property type="pathway name" value="Cross-presentation of soluble exogenous antigens (endosomes)"/>
</dbReference>
<dbReference type="Reactome" id="R-SPO-350562">
    <property type="pathway name" value="Regulation of ornithine decarboxylase (ODC)"/>
</dbReference>
<dbReference type="Reactome" id="R-SPO-5687128">
    <property type="pathway name" value="MAPK6/MAPK4 signaling"/>
</dbReference>
<dbReference type="Reactome" id="R-SPO-5689603">
    <property type="pathway name" value="UCH proteinases"/>
</dbReference>
<dbReference type="Reactome" id="R-SPO-5689880">
    <property type="pathway name" value="Ub-specific processing proteases"/>
</dbReference>
<dbReference type="Reactome" id="R-SPO-68949">
    <property type="pathway name" value="Orc1 removal from chromatin"/>
</dbReference>
<dbReference type="Reactome" id="R-SPO-69017">
    <property type="pathway name" value="CDK-mediated phosphorylation and removal of Cdc6"/>
</dbReference>
<dbReference type="Reactome" id="R-SPO-69601">
    <property type="pathway name" value="Ubiquitin Mediated Degradation of Phosphorylated Cdc25A"/>
</dbReference>
<dbReference type="Reactome" id="R-SPO-75815">
    <property type="pathway name" value="Ubiquitin-dependent degradation of Cyclin D"/>
</dbReference>
<dbReference type="Reactome" id="R-SPO-8854050">
    <property type="pathway name" value="FBXL7 down-regulates AURKA during mitotic entry and in early mitosis"/>
</dbReference>
<dbReference type="Reactome" id="R-SPO-8948751">
    <property type="pathway name" value="Regulation of PTEN stability and activity"/>
</dbReference>
<dbReference type="Reactome" id="R-SPO-8951664">
    <property type="pathway name" value="Neddylation"/>
</dbReference>
<dbReference type="Reactome" id="R-SPO-9755511">
    <property type="pathway name" value="KEAP1-NFE2L2 pathway"/>
</dbReference>
<dbReference type="Reactome" id="R-SPO-983168">
    <property type="pathway name" value="Antigen processing: Ubiquitination &amp; Proteasome degradation"/>
</dbReference>
<dbReference type="Reactome" id="R-SPO-9907900">
    <property type="pathway name" value="Proteasome assembly"/>
</dbReference>
<dbReference type="PRO" id="PR:P41836"/>
<dbReference type="Proteomes" id="UP000002485">
    <property type="component" value="Chromosome II"/>
</dbReference>
<dbReference type="GO" id="GO:0005829">
    <property type="term" value="C:cytosol"/>
    <property type="evidence" value="ECO:0007005"/>
    <property type="project" value="PomBase"/>
</dbReference>
<dbReference type="GO" id="GO:0005635">
    <property type="term" value="C:nuclear envelope"/>
    <property type="evidence" value="ECO:0007005"/>
    <property type="project" value="PomBase"/>
</dbReference>
<dbReference type="GO" id="GO:0005634">
    <property type="term" value="C:nucleus"/>
    <property type="evidence" value="ECO:0007005"/>
    <property type="project" value="PomBase"/>
</dbReference>
<dbReference type="GO" id="GO:0008540">
    <property type="term" value="C:proteasome regulatory particle, base subcomplex"/>
    <property type="evidence" value="ECO:0000314"/>
    <property type="project" value="PomBase"/>
</dbReference>
<dbReference type="GO" id="GO:0005524">
    <property type="term" value="F:ATP binding"/>
    <property type="evidence" value="ECO:0000255"/>
    <property type="project" value="PomBase"/>
</dbReference>
<dbReference type="GO" id="GO:0016887">
    <property type="term" value="F:ATP hydrolysis activity"/>
    <property type="evidence" value="ECO:0000303"/>
    <property type="project" value="PomBase"/>
</dbReference>
<dbReference type="GO" id="GO:0036402">
    <property type="term" value="F:proteasome-activating activity"/>
    <property type="evidence" value="ECO:0000318"/>
    <property type="project" value="GO_Central"/>
</dbReference>
<dbReference type="GO" id="GO:0043161">
    <property type="term" value="P:proteasome-mediated ubiquitin-dependent protein catabolic process"/>
    <property type="evidence" value="ECO:0000318"/>
    <property type="project" value="GO_Central"/>
</dbReference>
<dbReference type="FunFam" id="1.10.8.60:FF:000006">
    <property type="entry name" value="26S protease regulatory subunit 8"/>
    <property type="match status" value="1"/>
</dbReference>
<dbReference type="FunFam" id="2.40.50.140:FF:000044">
    <property type="entry name" value="26S protease regulatory subunit 8"/>
    <property type="match status" value="1"/>
</dbReference>
<dbReference type="FunFam" id="3.40.50.300:FF:000030">
    <property type="entry name" value="26S protease regulatory subunit 8"/>
    <property type="match status" value="1"/>
</dbReference>
<dbReference type="Gene3D" id="1.10.8.60">
    <property type="match status" value="1"/>
</dbReference>
<dbReference type="Gene3D" id="2.40.50.140">
    <property type="entry name" value="Nucleic acid-binding proteins"/>
    <property type="match status" value="1"/>
</dbReference>
<dbReference type="Gene3D" id="3.40.50.300">
    <property type="entry name" value="P-loop containing nucleotide triphosphate hydrolases"/>
    <property type="match status" value="1"/>
</dbReference>
<dbReference type="InterPro" id="IPR050221">
    <property type="entry name" value="26S_Proteasome_ATPase"/>
</dbReference>
<dbReference type="InterPro" id="IPR003593">
    <property type="entry name" value="AAA+_ATPase"/>
</dbReference>
<dbReference type="InterPro" id="IPR041569">
    <property type="entry name" value="AAA_lid_3"/>
</dbReference>
<dbReference type="InterPro" id="IPR003959">
    <property type="entry name" value="ATPase_AAA_core"/>
</dbReference>
<dbReference type="InterPro" id="IPR003960">
    <property type="entry name" value="ATPase_AAA_CS"/>
</dbReference>
<dbReference type="InterPro" id="IPR012340">
    <property type="entry name" value="NA-bd_OB-fold"/>
</dbReference>
<dbReference type="InterPro" id="IPR027417">
    <property type="entry name" value="P-loop_NTPase"/>
</dbReference>
<dbReference type="InterPro" id="IPR032501">
    <property type="entry name" value="Prot_ATP_ID_OB_2nd"/>
</dbReference>
<dbReference type="PANTHER" id="PTHR23073">
    <property type="entry name" value="26S PROTEASOME REGULATORY SUBUNIT"/>
    <property type="match status" value="1"/>
</dbReference>
<dbReference type="Pfam" id="PF00004">
    <property type="entry name" value="AAA"/>
    <property type="match status" value="1"/>
</dbReference>
<dbReference type="Pfam" id="PF17862">
    <property type="entry name" value="AAA_lid_3"/>
    <property type="match status" value="1"/>
</dbReference>
<dbReference type="Pfam" id="PF16450">
    <property type="entry name" value="Prot_ATP_ID_OB_C"/>
    <property type="match status" value="1"/>
</dbReference>
<dbReference type="SMART" id="SM00382">
    <property type="entry name" value="AAA"/>
    <property type="match status" value="1"/>
</dbReference>
<dbReference type="SUPFAM" id="SSF52540">
    <property type="entry name" value="P-loop containing nucleoside triphosphate hydrolases"/>
    <property type="match status" value="1"/>
</dbReference>
<dbReference type="PROSITE" id="PS00674">
    <property type="entry name" value="AAA"/>
    <property type="match status" value="1"/>
</dbReference>
<reference key="1">
    <citation type="journal article" date="1994" name="Gene">
        <title>The mating-type region of Schizosaccharomyces pombe contains an essential gene encoding a protein homologous to human modulators of HIV transactivation.</title>
        <authorList>
            <person name="Michael H."/>
            <person name="Schmidt H."/>
            <person name="Fleck O."/>
            <person name="Gutz H."/>
            <person name="Liedtke C."/>
            <person name="Lorentz A."/>
            <person name="Ostermann K."/>
        </authorList>
    </citation>
    <scope>NUCLEOTIDE SEQUENCE [GENOMIC DNA]</scope>
</reference>
<reference key="2">
    <citation type="journal article" date="2002" name="Nature">
        <title>The genome sequence of Schizosaccharomyces pombe.</title>
        <authorList>
            <person name="Wood V."/>
            <person name="Gwilliam R."/>
            <person name="Rajandream M.A."/>
            <person name="Lyne M.H."/>
            <person name="Lyne R."/>
            <person name="Stewart A."/>
            <person name="Sgouros J.G."/>
            <person name="Peat N."/>
            <person name="Hayles J."/>
            <person name="Baker S.G."/>
            <person name="Basham D."/>
            <person name="Bowman S."/>
            <person name="Brooks K."/>
            <person name="Brown D."/>
            <person name="Brown S."/>
            <person name="Chillingworth T."/>
            <person name="Churcher C.M."/>
            <person name="Collins M."/>
            <person name="Connor R."/>
            <person name="Cronin A."/>
            <person name="Davis P."/>
            <person name="Feltwell T."/>
            <person name="Fraser A."/>
            <person name="Gentles S."/>
            <person name="Goble A."/>
            <person name="Hamlin N."/>
            <person name="Harris D.E."/>
            <person name="Hidalgo J."/>
            <person name="Hodgson G."/>
            <person name="Holroyd S."/>
            <person name="Hornsby T."/>
            <person name="Howarth S."/>
            <person name="Huckle E.J."/>
            <person name="Hunt S."/>
            <person name="Jagels K."/>
            <person name="James K.D."/>
            <person name="Jones L."/>
            <person name="Jones M."/>
            <person name="Leather S."/>
            <person name="McDonald S."/>
            <person name="McLean J."/>
            <person name="Mooney P."/>
            <person name="Moule S."/>
            <person name="Mungall K.L."/>
            <person name="Murphy L.D."/>
            <person name="Niblett D."/>
            <person name="Odell C."/>
            <person name="Oliver K."/>
            <person name="O'Neil S."/>
            <person name="Pearson D."/>
            <person name="Quail M.A."/>
            <person name="Rabbinowitsch E."/>
            <person name="Rutherford K.M."/>
            <person name="Rutter S."/>
            <person name="Saunders D."/>
            <person name="Seeger K."/>
            <person name="Sharp S."/>
            <person name="Skelton J."/>
            <person name="Simmonds M.N."/>
            <person name="Squares R."/>
            <person name="Squares S."/>
            <person name="Stevens K."/>
            <person name="Taylor K."/>
            <person name="Taylor R.G."/>
            <person name="Tivey A."/>
            <person name="Walsh S.V."/>
            <person name="Warren T."/>
            <person name="Whitehead S."/>
            <person name="Woodward J.R."/>
            <person name="Volckaert G."/>
            <person name="Aert R."/>
            <person name="Robben J."/>
            <person name="Grymonprez B."/>
            <person name="Weltjens I."/>
            <person name="Vanstreels E."/>
            <person name="Rieger M."/>
            <person name="Schaefer M."/>
            <person name="Mueller-Auer S."/>
            <person name="Gabel C."/>
            <person name="Fuchs M."/>
            <person name="Duesterhoeft A."/>
            <person name="Fritzc C."/>
            <person name="Holzer E."/>
            <person name="Moestl D."/>
            <person name="Hilbert H."/>
            <person name="Borzym K."/>
            <person name="Langer I."/>
            <person name="Beck A."/>
            <person name="Lehrach H."/>
            <person name="Reinhardt R."/>
            <person name="Pohl T.M."/>
            <person name="Eger P."/>
            <person name="Zimmermann W."/>
            <person name="Wedler H."/>
            <person name="Wambutt R."/>
            <person name="Purnelle B."/>
            <person name="Goffeau A."/>
            <person name="Cadieu E."/>
            <person name="Dreano S."/>
            <person name="Gloux S."/>
            <person name="Lelaure V."/>
            <person name="Mottier S."/>
            <person name="Galibert F."/>
            <person name="Aves S.J."/>
            <person name="Xiang Z."/>
            <person name="Hunt C."/>
            <person name="Moore K."/>
            <person name="Hurst S.M."/>
            <person name="Lucas M."/>
            <person name="Rochet M."/>
            <person name="Gaillardin C."/>
            <person name="Tallada V.A."/>
            <person name="Garzon A."/>
            <person name="Thode G."/>
            <person name="Daga R.R."/>
            <person name="Cruzado L."/>
            <person name="Jimenez J."/>
            <person name="Sanchez M."/>
            <person name="del Rey F."/>
            <person name="Benito J."/>
            <person name="Dominguez A."/>
            <person name="Revuelta J.L."/>
            <person name="Moreno S."/>
            <person name="Armstrong J."/>
            <person name="Forsburg S.L."/>
            <person name="Cerutti L."/>
            <person name="Lowe T."/>
            <person name="McCombie W.R."/>
            <person name="Paulsen I."/>
            <person name="Potashkin J."/>
            <person name="Shpakovski G.V."/>
            <person name="Ussery D."/>
            <person name="Barrell B.G."/>
            <person name="Nurse P."/>
        </authorList>
    </citation>
    <scope>NUCLEOTIDE SEQUENCE [LARGE SCALE GENOMIC DNA]</scope>
    <source>
        <strain>972 / ATCC 24843</strain>
    </source>
</reference>
<name>PRS8_SCHPO</name>
<evidence type="ECO:0000250" key="1"/>
<evidence type="ECO:0000255" key="2"/>
<evidence type="ECO:0000305" key="3"/>
<accession>P41836</accession>
<organism>
    <name type="scientific">Schizosaccharomyces pombe (strain 972 / ATCC 24843)</name>
    <name type="common">Fission yeast</name>
    <dbReference type="NCBI Taxonomy" id="284812"/>
    <lineage>
        <taxon>Eukaryota</taxon>
        <taxon>Fungi</taxon>
        <taxon>Dikarya</taxon>
        <taxon>Ascomycota</taxon>
        <taxon>Taphrinomycotina</taxon>
        <taxon>Schizosaccharomycetes</taxon>
        <taxon>Schizosaccharomycetales</taxon>
        <taxon>Schizosaccharomycetaceae</taxon>
        <taxon>Schizosaccharomyces</taxon>
    </lineage>
</organism>
<proteinExistence type="inferred from homology"/>
<gene>
    <name type="primary">let1</name>
    <name type="ORF">SPBC23G7.12c</name>
</gene>
<comment type="function">
    <text evidence="1">The 26S proteasome is involved in the ATP-dependent degradation of ubiquitinated proteins. The regulatory (or ATPase) complex confers ATP dependency and substrate specificity to the 26S complex (By similarity).</text>
</comment>
<comment type="subcellular location">
    <subcellularLocation>
        <location evidence="3">Cytoplasm</location>
    </subcellularLocation>
    <subcellularLocation>
        <location evidence="3">Nucleus</location>
    </subcellularLocation>
</comment>
<comment type="similarity">
    <text evidence="3">Belongs to the AAA ATPase family.</text>
</comment>
<sequence>MTEVLKTNVLQSNENIVQYYTQKIQDAELAILQKTQNLRRLEAQRNGLNARVRLLREEIQLLQEPGSYVGEVIKTMGKNKVLVKVHPEGKYVVDISPDIDIKEIKPNIRVALRNDSYQLIKILPNKVDPLVSLMMVEKIPDSTYEMVGGLEKQIKEIKEVIELPVKHPELFESLGIPQPKGILLYGPPGTGKTLLARAVAHHTDCKFIRVSGSELVQKYIGEGSRMVRELFVMAREHAPSIIFMDEIDSIGSSRSDSSGGSGDSEVQRTMLELLNQLDGFEATKNIKVIMATNRIDILDPALLRPGRIDRKIEFPPPSAEARAEILRIHSRSMNLTRGIDLKSIAEKMNGASGAELKGVCTEAGMFALRERRVHVTQEDFELAVAKVLNKGDSGEMSLQKLFK</sequence>
<keyword id="KW-0067">ATP-binding</keyword>
<keyword id="KW-0963">Cytoplasm</keyword>
<keyword id="KW-0547">Nucleotide-binding</keyword>
<keyword id="KW-0539">Nucleus</keyword>
<keyword id="KW-0647">Proteasome</keyword>
<keyword id="KW-1185">Reference proteome</keyword>